<comment type="function">
    <text evidence="4">Component of the DSC E3 ubiquitin ligase complex which is required for the srbA transcriptional activator proteolytic cleavage to release the soluble transcription factor from the membrane in low oxygen or sterol conditions (PubMed:23104569). Required for growth during hypoxia and triazole drug susceptibility, as well as for virulence in a murine model of invasive pulmonary aspergillosis (IPA) (PubMed:23104569).</text>
</comment>
<comment type="pathway">
    <text evidence="7">Protein modification; protein ubiquitination.</text>
</comment>
<comment type="subunit">
    <text evidence="7">Component of the DSC E3 ubiquitin ligase complex composed of dscA, dscB, dscC and dscD.</text>
</comment>
<comment type="subcellular location">
    <subcellularLocation>
        <location evidence="7">Endoplasmic reticulum membrane</location>
        <topology evidence="1">Multi-pass membrane protein</topology>
    </subcellularLocation>
</comment>
<comment type="disruption phenotype">
    <text evidence="4">Impairs growth on solid media under hypoxia and leads to triazole susceptibility (PubMed:23104569). Impairs virulence in a murine model of invasive pulmonary aspergillosis (IPA) (PubMed:23104569).</text>
</comment>
<comment type="similarity">
    <text evidence="6">Belongs to the dsc3 family.</text>
</comment>
<protein>
    <recommendedName>
        <fullName evidence="5">DSC E3 ubiquitin ligase complex subunit C</fullName>
    </recommendedName>
    <alternativeName>
        <fullName evidence="5">Defective for SREBP cleavage protein C</fullName>
    </alternativeName>
</protein>
<accession>B0Y6Q5</accession>
<reference key="1">
    <citation type="journal article" date="2008" name="PLoS Genet.">
        <title>Genomic islands in the pathogenic filamentous fungus Aspergillus fumigatus.</title>
        <authorList>
            <person name="Fedorova N.D."/>
            <person name="Khaldi N."/>
            <person name="Joardar V.S."/>
            <person name="Maiti R."/>
            <person name="Amedeo P."/>
            <person name="Anderson M.J."/>
            <person name="Crabtree J."/>
            <person name="Silva J.C."/>
            <person name="Badger J.H."/>
            <person name="Albarraq A."/>
            <person name="Angiuoli S."/>
            <person name="Bussey H."/>
            <person name="Bowyer P."/>
            <person name="Cotty P.J."/>
            <person name="Dyer P.S."/>
            <person name="Egan A."/>
            <person name="Galens K."/>
            <person name="Fraser-Liggett C.M."/>
            <person name="Haas B.J."/>
            <person name="Inman J.M."/>
            <person name="Kent R."/>
            <person name="Lemieux S."/>
            <person name="Malavazi I."/>
            <person name="Orvis J."/>
            <person name="Roemer T."/>
            <person name="Ronning C.M."/>
            <person name="Sundaram J.P."/>
            <person name="Sutton G."/>
            <person name="Turner G."/>
            <person name="Venter J.C."/>
            <person name="White O.R."/>
            <person name="Whitty B.R."/>
            <person name="Youngman P."/>
            <person name="Wolfe K.H."/>
            <person name="Goldman G.H."/>
            <person name="Wortman J.R."/>
            <person name="Jiang B."/>
            <person name="Denning D.W."/>
            <person name="Nierman W.C."/>
        </authorList>
    </citation>
    <scope>NUCLEOTIDE SEQUENCE [LARGE SCALE GENOMIC DNA]</scope>
    <source>
        <strain>CBS 144.89 / FGSC A1163 / CEA10</strain>
    </source>
</reference>
<reference key="2">
    <citation type="journal article" date="2012" name="Eukaryot. Cell">
        <title>Dsc orthologs are required for hypoxia adaptation, triazole drug responses, and fungal virulence in Aspergillus fumigatus.</title>
        <authorList>
            <person name="Willger S.D."/>
            <person name="Cornish E.J."/>
            <person name="Chung D."/>
            <person name="Fleming B.A."/>
            <person name="Lehmann M.M."/>
            <person name="Puttikamonkul S."/>
            <person name="Cramer R.A."/>
        </authorList>
    </citation>
    <scope>FUNCTION</scope>
    <scope>DISRUPTION PHENOTYPE</scope>
</reference>
<gene>
    <name evidence="5" type="primary">dscC</name>
    <name type="ORF">AFUB_067780</name>
</gene>
<evidence type="ECO:0000255" key="1"/>
<evidence type="ECO:0000255" key="2">
    <source>
        <dbReference type="PROSITE-ProRule" id="PRU00498"/>
    </source>
</evidence>
<evidence type="ECO:0000256" key="3">
    <source>
        <dbReference type="SAM" id="MobiDB-lite"/>
    </source>
</evidence>
<evidence type="ECO:0000269" key="4">
    <source>
    </source>
</evidence>
<evidence type="ECO:0000303" key="5">
    <source>
    </source>
</evidence>
<evidence type="ECO:0000305" key="6"/>
<evidence type="ECO:0000305" key="7">
    <source>
    </source>
</evidence>
<name>DSCC_ASPFC</name>
<organism>
    <name type="scientific">Aspergillus fumigatus (strain CBS 144.89 / FGSC A1163 / CEA10)</name>
    <name type="common">Neosartorya fumigata</name>
    <dbReference type="NCBI Taxonomy" id="451804"/>
    <lineage>
        <taxon>Eukaryota</taxon>
        <taxon>Fungi</taxon>
        <taxon>Dikarya</taxon>
        <taxon>Ascomycota</taxon>
        <taxon>Pezizomycotina</taxon>
        <taxon>Eurotiomycetes</taxon>
        <taxon>Eurotiomycetidae</taxon>
        <taxon>Eurotiales</taxon>
        <taxon>Aspergillaceae</taxon>
        <taxon>Aspergillus</taxon>
        <taxon>Aspergillus subgen. Fumigati</taxon>
    </lineage>
</organism>
<proteinExistence type="inferred from homology"/>
<sequence length="309" mass="33135">MTFPAFLSPDPTWDGDSTGGPLLLTVRFSASIPDFPLDIENPDITTAAGLKQLIRTHLPPNLSSHRLRLIYAGRGLEDATPLSVSLKLPPSPSRTPVVQEDATTVKGKGKAPIREQPRLYIHCSIGDIVLSDADLAAEAAIATTLQQEQADEGYTGRKKQQQPPPSTTSAPRGFDRLLSAGFTPSEVSALRSQFMAIQSVSRTPDTMPTGAELRELEDRWMDEGSSAMAAGVPGGGEGISFADDDGGFGAGSRGAMDDMLWGAVMGFFWPVGCAMWLRREEGVWSWRKGLAVFVGVVINVAFGAMRIMN</sequence>
<dbReference type="EMBL" id="DS499598">
    <property type="protein sequence ID" value="EDP50440.1"/>
    <property type="molecule type" value="Genomic_DNA"/>
</dbReference>
<dbReference type="EnsemblFungi" id="EDP50440">
    <property type="protein sequence ID" value="EDP50440"/>
    <property type="gene ID" value="AFUB_067780"/>
</dbReference>
<dbReference type="VEuPathDB" id="FungiDB:AFUB_067780"/>
<dbReference type="HOGENOM" id="CLU_035821_0_0_1"/>
<dbReference type="OrthoDB" id="122381at5052"/>
<dbReference type="PhylomeDB" id="B0Y6Q5"/>
<dbReference type="UniPathway" id="UPA00143"/>
<dbReference type="Proteomes" id="UP000001699">
    <property type="component" value="Unassembled WGS sequence"/>
</dbReference>
<dbReference type="GO" id="GO:0044695">
    <property type="term" value="C:Dsc E3 ubiquitin ligase complex"/>
    <property type="evidence" value="ECO:0007669"/>
    <property type="project" value="InterPro"/>
</dbReference>
<dbReference type="GO" id="GO:0005789">
    <property type="term" value="C:endoplasmic reticulum membrane"/>
    <property type="evidence" value="ECO:0007669"/>
    <property type="project" value="UniProtKB-SubCell"/>
</dbReference>
<dbReference type="CDD" id="cd17039">
    <property type="entry name" value="Ubl_ubiquitin_like"/>
    <property type="match status" value="1"/>
</dbReference>
<dbReference type="FunFam" id="3.10.20.90:FF:000406">
    <property type="entry name" value="Putative conserved membrane protein"/>
    <property type="match status" value="1"/>
</dbReference>
<dbReference type="Gene3D" id="3.10.20.90">
    <property type="entry name" value="Phosphatidylinositol 3-kinase Catalytic Subunit, Chain A, domain 1"/>
    <property type="match status" value="1"/>
</dbReference>
<dbReference type="InterPro" id="IPR045226">
    <property type="entry name" value="Dsc3"/>
</dbReference>
<dbReference type="InterPro" id="IPR025390">
    <property type="entry name" value="Dsc3_C"/>
</dbReference>
<dbReference type="InterPro" id="IPR019413">
    <property type="entry name" value="Dsc3_ub-like_dom"/>
</dbReference>
<dbReference type="InterPro" id="IPR029071">
    <property type="entry name" value="Ubiquitin-like_domsf"/>
</dbReference>
<dbReference type="PANTHER" id="PTHR28049:SF1">
    <property type="entry name" value="DSC E3 UBIQUITIN LIGASE COMPLEX SUBUNIT 3"/>
    <property type="match status" value="1"/>
</dbReference>
<dbReference type="PANTHER" id="PTHR28049">
    <property type="entry name" value="TRANSMEMBRANE PROTEIN YOR223W"/>
    <property type="match status" value="1"/>
</dbReference>
<dbReference type="Pfam" id="PF13373">
    <property type="entry name" value="Dsc3_C"/>
    <property type="match status" value="1"/>
</dbReference>
<dbReference type="Pfam" id="PF10302">
    <property type="entry name" value="Dsc3_N"/>
    <property type="match status" value="1"/>
</dbReference>
<dbReference type="SUPFAM" id="SSF54236">
    <property type="entry name" value="Ubiquitin-like"/>
    <property type="match status" value="1"/>
</dbReference>
<keyword id="KW-0256">Endoplasmic reticulum</keyword>
<keyword id="KW-0325">Glycoprotein</keyword>
<keyword id="KW-0472">Membrane</keyword>
<keyword id="KW-0812">Transmembrane</keyword>
<keyword id="KW-1133">Transmembrane helix</keyword>
<keyword id="KW-0833">Ubl conjugation pathway</keyword>
<feature type="chain" id="PRO_0000460155" description="DSC E3 ubiquitin ligase complex subunit C">
    <location>
        <begin position="1"/>
        <end position="309"/>
    </location>
</feature>
<feature type="transmembrane region" description="Helical" evidence="1">
    <location>
        <begin position="257"/>
        <end position="277"/>
    </location>
</feature>
<feature type="transmembrane region" description="Helical" evidence="1">
    <location>
        <begin position="289"/>
        <end position="309"/>
    </location>
</feature>
<feature type="region of interest" description="Disordered" evidence="3">
    <location>
        <begin position="88"/>
        <end position="110"/>
    </location>
</feature>
<feature type="region of interest" description="Disordered" evidence="3">
    <location>
        <begin position="148"/>
        <end position="177"/>
    </location>
</feature>
<feature type="glycosylation site" description="N-linked (GlcNAc...) asparagine" evidence="2">
    <location>
        <position position="61"/>
    </location>
</feature>